<organism>
    <name type="scientific">Campylobacter jejuni (strain RM1221)</name>
    <dbReference type="NCBI Taxonomy" id="195099"/>
    <lineage>
        <taxon>Bacteria</taxon>
        <taxon>Pseudomonadati</taxon>
        <taxon>Campylobacterota</taxon>
        <taxon>Epsilonproteobacteria</taxon>
        <taxon>Campylobacterales</taxon>
        <taxon>Campylobacteraceae</taxon>
        <taxon>Campylobacter</taxon>
    </lineage>
</organism>
<dbReference type="EC" id="2.5.1.19" evidence="1"/>
<dbReference type="EMBL" id="CP000025">
    <property type="protein sequence ID" value="AAW35307.1"/>
    <property type="molecule type" value="Genomic_DNA"/>
</dbReference>
<dbReference type="RefSeq" id="WP_011049807.1">
    <property type="nucleotide sequence ID" value="NC_003912.7"/>
</dbReference>
<dbReference type="SMR" id="Q5HUR3"/>
<dbReference type="KEGG" id="cjr:CJE0974"/>
<dbReference type="HOGENOM" id="CLU_024321_0_1_7"/>
<dbReference type="UniPathway" id="UPA00053">
    <property type="reaction ID" value="UER00089"/>
</dbReference>
<dbReference type="GO" id="GO:0005737">
    <property type="term" value="C:cytoplasm"/>
    <property type="evidence" value="ECO:0007669"/>
    <property type="project" value="UniProtKB-SubCell"/>
</dbReference>
<dbReference type="GO" id="GO:0003866">
    <property type="term" value="F:3-phosphoshikimate 1-carboxyvinyltransferase activity"/>
    <property type="evidence" value="ECO:0007669"/>
    <property type="project" value="UniProtKB-UniRule"/>
</dbReference>
<dbReference type="GO" id="GO:0008652">
    <property type="term" value="P:amino acid biosynthetic process"/>
    <property type="evidence" value="ECO:0007669"/>
    <property type="project" value="UniProtKB-KW"/>
</dbReference>
<dbReference type="GO" id="GO:0009073">
    <property type="term" value="P:aromatic amino acid family biosynthetic process"/>
    <property type="evidence" value="ECO:0007669"/>
    <property type="project" value="UniProtKB-KW"/>
</dbReference>
<dbReference type="GO" id="GO:0009423">
    <property type="term" value="P:chorismate biosynthetic process"/>
    <property type="evidence" value="ECO:0007669"/>
    <property type="project" value="UniProtKB-UniRule"/>
</dbReference>
<dbReference type="CDD" id="cd01556">
    <property type="entry name" value="EPSP_synthase"/>
    <property type="match status" value="1"/>
</dbReference>
<dbReference type="FunFam" id="3.65.10.10:FF:000005">
    <property type="entry name" value="3-phosphoshikimate 1-carboxyvinyltransferase"/>
    <property type="match status" value="1"/>
</dbReference>
<dbReference type="Gene3D" id="3.65.10.10">
    <property type="entry name" value="Enolpyruvate transferase domain"/>
    <property type="match status" value="2"/>
</dbReference>
<dbReference type="HAMAP" id="MF_00210">
    <property type="entry name" value="EPSP_synth"/>
    <property type="match status" value="1"/>
</dbReference>
<dbReference type="InterPro" id="IPR001986">
    <property type="entry name" value="Enolpyruvate_Tfrase_dom"/>
</dbReference>
<dbReference type="InterPro" id="IPR036968">
    <property type="entry name" value="Enolpyruvate_Tfrase_sf"/>
</dbReference>
<dbReference type="InterPro" id="IPR006264">
    <property type="entry name" value="EPSP_synthase"/>
</dbReference>
<dbReference type="InterPro" id="IPR023193">
    <property type="entry name" value="EPSP_synthase_CS"/>
</dbReference>
<dbReference type="InterPro" id="IPR013792">
    <property type="entry name" value="RNA3'P_cycl/enolpyr_Trfase_a/b"/>
</dbReference>
<dbReference type="NCBIfam" id="TIGR01356">
    <property type="entry name" value="aroA"/>
    <property type="match status" value="1"/>
</dbReference>
<dbReference type="PANTHER" id="PTHR21090">
    <property type="entry name" value="AROM/DEHYDROQUINATE SYNTHASE"/>
    <property type="match status" value="1"/>
</dbReference>
<dbReference type="PANTHER" id="PTHR21090:SF5">
    <property type="entry name" value="PENTAFUNCTIONAL AROM POLYPEPTIDE"/>
    <property type="match status" value="1"/>
</dbReference>
<dbReference type="Pfam" id="PF00275">
    <property type="entry name" value="EPSP_synthase"/>
    <property type="match status" value="1"/>
</dbReference>
<dbReference type="PIRSF" id="PIRSF000505">
    <property type="entry name" value="EPSPS"/>
    <property type="match status" value="1"/>
</dbReference>
<dbReference type="SUPFAM" id="SSF55205">
    <property type="entry name" value="EPT/RTPC-like"/>
    <property type="match status" value="1"/>
</dbReference>
<dbReference type="PROSITE" id="PS00104">
    <property type="entry name" value="EPSP_SYNTHASE_1"/>
    <property type="match status" value="1"/>
</dbReference>
<dbReference type="PROSITE" id="PS00885">
    <property type="entry name" value="EPSP_SYNTHASE_2"/>
    <property type="match status" value="1"/>
</dbReference>
<proteinExistence type="inferred from homology"/>
<sequence length="428" mass="47348">MKIYKLQTPVNAILENIAADKSISHRFAIFSLLTQEENKAQNYLLAQDTLNTLEIIKNLGAKIEQKDSCVKIIPPKEILSPNCILDCGNSGTAMRLMIGFLAGIFGFFVLSGDKYLNNRPMRRISKPLTQIGARIYGRNEANLAPLCIEGQKLKAFNFKSEISSAQVKTAMILSAFRADNVCTFSEISLSRNHSENMLKAMKAPIRVSNDGLSLEINPLKKPLKAQNIIIPNDPSSAFYFVLAAIILPKSQIILKNILLNPTRIEAYKILQKMGAKLEMTITQNDFETIGEIRVESSKLNGIEVKDNIAWLIDEAPALAIAFALAKGKSSLINAKELRVKESDRIAVMVENLKLCGVEARELDDGFEIEGGCELKSSKIKSYGDHRIAMSFAILGLLCGIEIDDSDCIKTSFPNFIEILSNLGARIDY</sequence>
<feature type="chain" id="PRO_1000012423" description="3-phosphoshikimate 1-carboxyvinyltransferase">
    <location>
        <begin position="1"/>
        <end position="428"/>
    </location>
</feature>
<feature type="active site" description="Proton acceptor" evidence="1">
    <location>
        <position position="313"/>
    </location>
</feature>
<feature type="binding site" evidence="1">
    <location>
        <position position="21"/>
    </location>
    <ligand>
        <name>3-phosphoshikimate</name>
        <dbReference type="ChEBI" id="CHEBI:145989"/>
    </ligand>
</feature>
<feature type="binding site" evidence="1">
    <location>
        <position position="21"/>
    </location>
    <ligand>
        <name>phosphoenolpyruvate</name>
        <dbReference type="ChEBI" id="CHEBI:58702"/>
    </ligand>
</feature>
<feature type="binding site" evidence="1">
    <location>
        <position position="22"/>
    </location>
    <ligand>
        <name>3-phosphoshikimate</name>
        <dbReference type="ChEBI" id="CHEBI:145989"/>
    </ligand>
</feature>
<feature type="binding site" evidence="1">
    <location>
        <position position="26"/>
    </location>
    <ligand>
        <name>3-phosphoshikimate</name>
        <dbReference type="ChEBI" id="CHEBI:145989"/>
    </ligand>
</feature>
<feature type="binding site" evidence="1">
    <location>
        <position position="91"/>
    </location>
    <ligand>
        <name>phosphoenolpyruvate</name>
        <dbReference type="ChEBI" id="CHEBI:58702"/>
    </ligand>
</feature>
<feature type="binding site" evidence="1">
    <location>
        <position position="119"/>
    </location>
    <ligand>
        <name>phosphoenolpyruvate</name>
        <dbReference type="ChEBI" id="CHEBI:58702"/>
    </ligand>
</feature>
<feature type="binding site" evidence="1">
    <location>
        <position position="164"/>
    </location>
    <ligand>
        <name>3-phosphoshikimate</name>
        <dbReference type="ChEBI" id="CHEBI:145989"/>
    </ligand>
</feature>
<feature type="binding site" evidence="1">
    <location>
        <position position="166"/>
    </location>
    <ligand>
        <name>3-phosphoshikimate</name>
        <dbReference type="ChEBI" id="CHEBI:145989"/>
    </ligand>
</feature>
<feature type="binding site" evidence="1">
    <location>
        <position position="166"/>
    </location>
    <ligand>
        <name>phosphoenolpyruvate</name>
        <dbReference type="ChEBI" id="CHEBI:58702"/>
    </ligand>
</feature>
<feature type="binding site" evidence="1">
    <location>
        <position position="313"/>
    </location>
    <ligand>
        <name>3-phosphoshikimate</name>
        <dbReference type="ChEBI" id="CHEBI:145989"/>
    </ligand>
</feature>
<feature type="binding site" evidence="1">
    <location>
        <position position="340"/>
    </location>
    <ligand>
        <name>3-phosphoshikimate</name>
        <dbReference type="ChEBI" id="CHEBI:145989"/>
    </ligand>
</feature>
<feature type="binding site" evidence="1">
    <location>
        <position position="344"/>
    </location>
    <ligand>
        <name>phosphoenolpyruvate</name>
        <dbReference type="ChEBI" id="CHEBI:58702"/>
    </ligand>
</feature>
<feature type="binding site" evidence="1">
    <location>
        <position position="386"/>
    </location>
    <ligand>
        <name>phosphoenolpyruvate</name>
        <dbReference type="ChEBI" id="CHEBI:58702"/>
    </ligand>
</feature>
<name>AROA_CAMJR</name>
<evidence type="ECO:0000255" key="1">
    <source>
        <dbReference type="HAMAP-Rule" id="MF_00210"/>
    </source>
</evidence>
<comment type="function">
    <text evidence="1">Catalyzes the transfer of the enolpyruvyl moiety of phosphoenolpyruvate (PEP) to the 5-hydroxyl of shikimate-3-phosphate (S3P) to produce enolpyruvyl shikimate-3-phosphate and inorganic phosphate.</text>
</comment>
<comment type="catalytic activity">
    <reaction evidence="1">
        <text>3-phosphoshikimate + phosphoenolpyruvate = 5-O-(1-carboxyvinyl)-3-phosphoshikimate + phosphate</text>
        <dbReference type="Rhea" id="RHEA:21256"/>
        <dbReference type="ChEBI" id="CHEBI:43474"/>
        <dbReference type="ChEBI" id="CHEBI:57701"/>
        <dbReference type="ChEBI" id="CHEBI:58702"/>
        <dbReference type="ChEBI" id="CHEBI:145989"/>
        <dbReference type="EC" id="2.5.1.19"/>
    </reaction>
    <physiologicalReaction direction="left-to-right" evidence="1">
        <dbReference type="Rhea" id="RHEA:21257"/>
    </physiologicalReaction>
</comment>
<comment type="pathway">
    <text evidence="1">Metabolic intermediate biosynthesis; chorismate biosynthesis; chorismate from D-erythrose 4-phosphate and phosphoenolpyruvate: step 6/7.</text>
</comment>
<comment type="subunit">
    <text evidence="1">Monomer.</text>
</comment>
<comment type="subcellular location">
    <subcellularLocation>
        <location evidence="1">Cytoplasm</location>
    </subcellularLocation>
</comment>
<comment type="similarity">
    <text evidence="1">Belongs to the EPSP synthase family.</text>
</comment>
<keyword id="KW-0028">Amino-acid biosynthesis</keyword>
<keyword id="KW-0057">Aromatic amino acid biosynthesis</keyword>
<keyword id="KW-0963">Cytoplasm</keyword>
<keyword id="KW-0808">Transferase</keyword>
<gene>
    <name evidence="1" type="primary">aroA</name>
    <name type="ordered locus">CJE0974</name>
</gene>
<protein>
    <recommendedName>
        <fullName evidence="1">3-phosphoshikimate 1-carboxyvinyltransferase</fullName>
        <ecNumber evidence="1">2.5.1.19</ecNumber>
    </recommendedName>
    <alternativeName>
        <fullName evidence="1">5-enolpyruvylshikimate-3-phosphate synthase</fullName>
        <shortName evidence="1">EPSP synthase</shortName>
        <shortName evidence="1">EPSPS</shortName>
    </alternativeName>
</protein>
<reference key="1">
    <citation type="journal article" date="2005" name="PLoS Biol.">
        <title>Major structural differences and novel potential virulence mechanisms from the genomes of multiple Campylobacter species.</title>
        <authorList>
            <person name="Fouts D.E."/>
            <person name="Mongodin E.F."/>
            <person name="Mandrell R.E."/>
            <person name="Miller W.G."/>
            <person name="Rasko D.A."/>
            <person name="Ravel J."/>
            <person name="Brinkac L.M."/>
            <person name="DeBoy R.T."/>
            <person name="Parker C.T."/>
            <person name="Daugherty S.C."/>
            <person name="Dodson R.J."/>
            <person name="Durkin A.S."/>
            <person name="Madupu R."/>
            <person name="Sullivan S.A."/>
            <person name="Shetty J.U."/>
            <person name="Ayodeji M.A."/>
            <person name="Shvartsbeyn A."/>
            <person name="Schatz M.C."/>
            <person name="Badger J.H."/>
            <person name="Fraser C.M."/>
            <person name="Nelson K.E."/>
        </authorList>
    </citation>
    <scope>NUCLEOTIDE SEQUENCE [LARGE SCALE GENOMIC DNA]</scope>
    <source>
        <strain>RM1221</strain>
    </source>
</reference>
<accession>Q5HUR3</accession>